<dbReference type="EC" id="5.6.2.1" evidence="1"/>
<dbReference type="EMBL" id="AL445063">
    <property type="protein sequence ID" value="CAC11211.1"/>
    <property type="molecule type" value="Genomic_DNA"/>
</dbReference>
<dbReference type="RefSeq" id="WP_010900491.1">
    <property type="nucleotide sequence ID" value="NC_002578.1"/>
</dbReference>
<dbReference type="SMR" id="Q9HM08"/>
<dbReference type="FunCoup" id="Q9HM08">
    <property type="interactions" value="147"/>
</dbReference>
<dbReference type="STRING" id="273075.gene:9571278"/>
<dbReference type="PaxDb" id="273075-Ta0063"/>
<dbReference type="EnsemblBacteria" id="CAC11211">
    <property type="protein sequence ID" value="CAC11211"/>
    <property type="gene ID" value="CAC11211"/>
</dbReference>
<dbReference type="KEGG" id="tac:Ta0063"/>
<dbReference type="eggNOG" id="arCOG01527">
    <property type="taxonomic scope" value="Archaea"/>
</dbReference>
<dbReference type="HOGENOM" id="CLU_002929_1_4_2"/>
<dbReference type="InParanoid" id="Q9HM08"/>
<dbReference type="OrthoDB" id="30963at2157"/>
<dbReference type="Proteomes" id="UP000001024">
    <property type="component" value="Chromosome"/>
</dbReference>
<dbReference type="GO" id="GO:0005694">
    <property type="term" value="C:chromosome"/>
    <property type="evidence" value="ECO:0007669"/>
    <property type="project" value="InterPro"/>
</dbReference>
<dbReference type="GO" id="GO:0003677">
    <property type="term" value="F:DNA binding"/>
    <property type="evidence" value="ECO:0007669"/>
    <property type="project" value="UniProtKB-KW"/>
</dbReference>
<dbReference type="GO" id="GO:0003917">
    <property type="term" value="F:DNA topoisomerase type I (single strand cut, ATP-independent) activity"/>
    <property type="evidence" value="ECO:0007669"/>
    <property type="project" value="UniProtKB-UniRule"/>
</dbReference>
<dbReference type="GO" id="GO:0008270">
    <property type="term" value="F:zinc ion binding"/>
    <property type="evidence" value="ECO:0007669"/>
    <property type="project" value="UniProtKB-KW"/>
</dbReference>
<dbReference type="GO" id="GO:0006310">
    <property type="term" value="P:DNA recombination"/>
    <property type="evidence" value="ECO:0007669"/>
    <property type="project" value="TreeGrafter"/>
</dbReference>
<dbReference type="GO" id="GO:0006281">
    <property type="term" value="P:DNA repair"/>
    <property type="evidence" value="ECO:0007669"/>
    <property type="project" value="TreeGrafter"/>
</dbReference>
<dbReference type="GO" id="GO:0006265">
    <property type="term" value="P:DNA topological change"/>
    <property type="evidence" value="ECO:0007669"/>
    <property type="project" value="UniProtKB-UniRule"/>
</dbReference>
<dbReference type="CDD" id="cd00186">
    <property type="entry name" value="TOP1Ac"/>
    <property type="match status" value="1"/>
</dbReference>
<dbReference type="CDD" id="cd03362">
    <property type="entry name" value="TOPRIM_TopoIA_TopoIII"/>
    <property type="match status" value="1"/>
</dbReference>
<dbReference type="FunFam" id="1.10.290.10:FF:000003">
    <property type="entry name" value="DNA topoisomerase"/>
    <property type="match status" value="1"/>
</dbReference>
<dbReference type="Gene3D" id="3.40.50.140">
    <property type="match status" value="1"/>
</dbReference>
<dbReference type="Gene3D" id="3.30.65.10">
    <property type="entry name" value="Bacterial Topoisomerase I, domain 1"/>
    <property type="match status" value="1"/>
</dbReference>
<dbReference type="Gene3D" id="1.10.460.10">
    <property type="entry name" value="Topoisomerase I, domain 2"/>
    <property type="match status" value="1"/>
</dbReference>
<dbReference type="Gene3D" id="2.70.20.10">
    <property type="entry name" value="Topoisomerase I, domain 3"/>
    <property type="match status" value="1"/>
</dbReference>
<dbReference type="Gene3D" id="1.10.290.10">
    <property type="entry name" value="Topoisomerase I, domain 4"/>
    <property type="match status" value="1"/>
</dbReference>
<dbReference type="HAMAP" id="MF_00952">
    <property type="entry name" value="Topoisom_1_prok"/>
    <property type="match status" value="1"/>
</dbReference>
<dbReference type="InterPro" id="IPR000380">
    <property type="entry name" value="Topo_IA"/>
</dbReference>
<dbReference type="InterPro" id="IPR003601">
    <property type="entry name" value="Topo_IA_2"/>
</dbReference>
<dbReference type="InterPro" id="IPR023406">
    <property type="entry name" value="Topo_IA_AS"/>
</dbReference>
<dbReference type="InterPro" id="IPR013497">
    <property type="entry name" value="Topo_IA_cen"/>
</dbReference>
<dbReference type="InterPro" id="IPR013824">
    <property type="entry name" value="Topo_IA_cen_sub1"/>
</dbReference>
<dbReference type="InterPro" id="IPR013825">
    <property type="entry name" value="Topo_IA_cen_sub2"/>
</dbReference>
<dbReference type="InterPro" id="IPR013826">
    <property type="entry name" value="Topo_IA_cen_sub3"/>
</dbReference>
<dbReference type="InterPro" id="IPR023405">
    <property type="entry name" value="Topo_IA_core_domain"/>
</dbReference>
<dbReference type="InterPro" id="IPR003602">
    <property type="entry name" value="Topo_IA_DNA-bd_dom"/>
</dbReference>
<dbReference type="InterPro" id="IPR013498">
    <property type="entry name" value="Topo_IA_Znf"/>
</dbReference>
<dbReference type="InterPro" id="IPR028612">
    <property type="entry name" value="Topoisom_1_IA"/>
</dbReference>
<dbReference type="InterPro" id="IPR006171">
    <property type="entry name" value="TOPRIM_dom"/>
</dbReference>
<dbReference type="InterPro" id="IPR034144">
    <property type="entry name" value="TOPRIM_TopoIII"/>
</dbReference>
<dbReference type="NCBIfam" id="NF005555">
    <property type="entry name" value="PRK07220.1"/>
    <property type="match status" value="1"/>
</dbReference>
<dbReference type="PANTHER" id="PTHR11390:SF26">
    <property type="entry name" value="DNA TOPOISOMERASE 1"/>
    <property type="match status" value="1"/>
</dbReference>
<dbReference type="PANTHER" id="PTHR11390">
    <property type="entry name" value="PROKARYOTIC DNA TOPOISOMERASE"/>
    <property type="match status" value="1"/>
</dbReference>
<dbReference type="Pfam" id="PF01131">
    <property type="entry name" value="Topoisom_bac"/>
    <property type="match status" value="1"/>
</dbReference>
<dbReference type="Pfam" id="PF01751">
    <property type="entry name" value="Toprim"/>
    <property type="match status" value="1"/>
</dbReference>
<dbReference type="Pfam" id="PF01396">
    <property type="entry name" value="Zn_ribbon_Top1"/>
    <property type="match status" value="1"/>
</dbReference>
<dbReference type="PRINTS" id="PR00417">
    <property type="entry name" value="PRTPISMRASEI"/>
</dbReference>
<dbReference type="SMART" id="SM00437">
    <property type="entry name" value="TOP1Ac"/>
    <property type="match status" value="1"/>
</dbReference>
<dbReference type="SMART" id="SM00436">
    <property type="entry name" value="TOP1Bc"/>
    <property type="match status" value="1"/>
</dbReference>
<dbReference type="SMART" id="SM00493">
    <property type="entry name" value="TOPRIM"/>
    <property type="match status" value="1"/>
</dbReference>
<dbReference type="SUPFAM" id="SSF57716">
    <property type="entry name" value="Glucocorticoid receptor-like (DNA-binding domain)"/>
    <property type="match status" value="1"/>
</dbReference>
<dbReference type="SUPFAM" id="SSF56712">
    <property type="entry name" value="Prokaryotic type I DNA topoisomerase"/>
    <property type="match status" value="1"/>
</dbReference>
<dbReference type="SUPFAM" id="SSF57783">
    <property type="entry name" value="Zinc beta-ribbon"/>
    <property type="match status" value="1"/>
</dbReference>
<dbReference type="PROSITE" id="PS00396">
    <property type="entry name" value="TOPO_IA_1"/>
    <property type="match status" value="1"/>
</dbReference>
<dbReference type="PROSITE" id="PS52039">
    <property type="entry name" value="TOPO_IA_2"/>
    <property type="match status" value="1"/>
</dbReference>
<dbReference type="PROSITE" id="PS50880">
    <property type="entry name" value="TOPRIM"/>
    <property type="match status" value="1"/>
</dbReference>
<accession>Q9HM08</accession>
<gene>
    <name evidence="1" type="primary">topA</name>
    <name type="ordered locus">Ta0063</name>
</gene>
<evidence type="ECO:0000255" key="1">
    <source>
        <dbReference type="HAMAP-Rule" id="MF_00952"/>
    </source>
</evidence>
<evidence type="ECO:0000255" key="2">
    <source>
        <dbReference type="PROSITE-ProRule" id="PRU01383"/>
    </source>
</evidence>
<name>TOP1_THEAC</name>
<sequence length="770" mass="87667">MDGFRIIIAEKADAGRRIAYFLSGGQVKSHRAKGTSYLEFEYNGSKTYLIPLSGHIVEADFESGYSDWNKIDLSDLIDARIVKNIKNKVAYQTLQAFRGKVEEIVIATDYDREGELIGVEALDIIKEGKEEIRRAKFSALTKNEILDSFKNLIGVNYSLADAADARESIDLIWGSVLTRFFSVTTGRLGKSFLSAGRVQTPTLAIVVDREREIQSFRPERYWTISITFDKDGQFKARYPENIKDQDTAEKIYEAIKGKNGRVSSYTSKEDHIRRPAPFSTTEFLREASRIGIMPTKAMSIAENLYMRGLISYPRTDNTVYPRSINLKSVLKKLENTAYSKYVKEIETFDRILPSRGRIETTDHPPIYPVDSPKEQLKGDYGRVYDLILRHFLSTLYRDGKKTVAEAEIYVNGYTFKAAGQHTTDRGWTEIYGYDPKDVYLPELTEGEDLKAIDWNIQREETKPPPRYDMSSLLKKMEELNLGTKSTRHDIIGKLIERGFIEGNPVKPTPLGMAFIDAVRSVNSHIADPEMTAKLEEDMDRIEKNEMSKNDVVEESKKMLHEVLSHFLTKTADVKDIITKGINAGQEIGDCPFHEGKKIMVIRDRFTYTVRCEDPSCKINFRIKRNGSITLSDQKCPVCGLPMIKIIRKGQSPEIKCIDPDCSYNRENEDYGECPADHGRLVLRQSKYGKRFLGCSNYPKCTVTYPLPQMGRITKTGEVCPYCGAPILALSRNGRKWKFCPNMQCEYNKKRKPEAAVEKSVRKKGRNASKS</sequence>
<reference key="1">
    <citation type="journal article" date="2000" name="Nature">
        <title>The genome sequence of the thermoacidophilic scavenger Thermoplasma acidophilum.</title>
        <authorList>
            <person name="Ruepp A."/>
            <person name="Graml W."/>
            <person name="Santos-Martinez M.-L."/>
            <person name="Koretke K.K."/>
            <person name="Volker C."/>
            <person name="Mewes H.-W."/>
            <person name="Frishman D."/>
            <person name="Stocker S."/>
            <person name="Lupas A.N."/>
            <person name="Baumeister W."/>
        </authorList>
    </citation>
    <scope>NUCLEOTIDE SEQUENCE [LARGE SCALE GENOMIC DNA]</scope>
    <source>
        <strain>ATCC 25905 / DSM 1728 / JCM 9062 / NBRC 15155 / AMRC-C165</strain>
    </source>
</reference>
<protein>
    <recommendedName>
        <fullName evidence="1">DNA topoisomerase 1</fullName>
        <ecNumber evidence="1">5.6.2.1</ecNumber>
    </recommendedName>
    <alternativeName>
        <fullName evidence="1">DNA topoisomerase I</fullName>
    </alternativeName>
    <alternativeName>
        <fullName>Omega-protein</fullName>
    </alternativeName>
    <alternativeName>
        <fullName>Relaxing enzyme</fullName>
    </alternativeName>
    <alternativeName>
        <fullName>Swivelase</fullName>
    </alternativeName>
    <alternativeName>
        <fullName>Untwisting enzyme</fullName>
    </alternativeName>
</protein>
<keyword id="KW-0238">DNA-binding</keyword>
<keyword id="KW-0413">Isomerase</keyword>
<keyword id="KW-0460">Magnesium</keyword>
<keyword id="KW-0479">Metal-binding</keyword>
<keyword id="KW-1185">Reference proteome</keyword>
<keyword id="KW-0677">Repeat</keyword>
<keyword id="KW-0799">Topoisomerase</keyword>
<keyword id="KW-0862">Zinc</keyword>
<keyword id="KW-0863">Zinc-finger</keyword>
<feature type="chain" id="PRO_0000145182" description="DNA topoisomerase 1">
    <location>
        <begin position="1"/>
        <end position="770"/>
    </location>
</feature>
<feature type="domain" description="Toprim" evidence="1">
    <location>
        <begin position="4"/>
        <end position="140"/>
    </location>
</feature>
<feature type="domain" description="Topo IA-type catalytic" evidence="2">
    <location>
        <begin position="156"/>
        <end position="563"/>
    </location>
</feature>
<feature type="zinc finger region" description="C4-type 1">
    <location>
        <begin position="611"/>
        <end position="638"/>
    </location>
</feature>
<feature type="zinc finger region" description="C4-type 2">
    <location>
        <begin position="673"/>
        <end position="700"/>
    </location>
</feature>
<feature type="zinc finger region" description="C4-type 3">
    <location>
        <begin position="719"/>
        <end position="744"/>
    </location>
</feature>
<feature type="region of interest" description="Interaction with DNA" evidence="1">
    <location>
        <begin position="194"/>
        <end position="199"/>
    </location>
</feature>
<feature type="active site" description="O-(5'-phospho-DNA)-tyrosine intermediate" evidence="2">
    <location>
        <position position="312"/>
    </location>
</feature>
<feature type="binding site" evidence="1">
    <location>
        <position position="10"/>
    </location>
    <ligand>
        <name>Mg(2+)</name>
        <dbReference type="ChEBI" id="CHEBI:18420"/>
        <note>catalytic</note>
    </ligand>
</feature>
<feature type="binding site" evidence="1">
    <location>
        <position position="109"/>
    </location>
    <ligand>
        <name>Mg(2+)</name>
        <dbReference type="ChEBI" id="CHEBI:18420"/>
        <note>catalytic</note>
    </ligand>
</feature>
<feature type="site" description="Interaction with DNA" evidence="1">
    <location>
        <position position="55"/>
    </location>
</feature>
<feature type="site" description="Interaction with DNA" evidence="1">
    <location>
        <position position="166"/>
    </location>
</feature>
<feature type="site" description="Interaction with DNA" evidence="1">
    <location>
        <position position="170"/>
    </location>
</feature>
<feature type="site" description="Interaction with DNA" evidence="1">
    <location>
        <position position="314"/>
    </location>
</feature>
<feature type="site" description="Interaction with DNA" evidence="1">
    <location>
        <position position="497"/>
    </location>
</feature>
<proteinExistence type="inferred from homology"/>
<comment type="function">
    <text evidence="1">Releases the supercoiling and torsional tension of DNA, which is introduced during the DNA replication and transcription, by transiently cleaving and rejoining one strand of the DNA duplex. Introduces a single-strand break via transesterification at a target site in duplex DNA. The scissile phosphodiester is attacked by the catalytic tyrosine of the enzyme, resulting in the formation of a DNA-(5'-phosphotyrosyl)-enzyme intermediate and the expulsion of a 3'-OH DNA strand. The free DNA strand then undergoes passage around the unbroken strand, thus removing DNA supercoils. Finally, in the religation step, the DNA 3'-OH attacks the covalent intermediate to expel the active-site tyrosine and restore the DNA phosphodiester backbone.</text>
</comment>
<comment type="catalytic activity">
    <reaction evidence="1">
        <text>ATP-independent breakage of single-stranded DNA, followed by passage and rejoining.</text>
        <dbReference type="EC" id="5.6.2.1"/>
    </reaction>
</comment>
<comment type="cofactor">
    <cofactor evidence="1">
        <name>Mg(2+)</name>
        <dbReference type="ChEBI" id="CHEBI:18420"/>
    </cofactor>
</comment>
<comment type="subunit">
    <text evidence="1">Monomer.</text>
</comment>
<comment type="similarity">
    <text evidence="1">Belongs to the type IA topoisomerase family.</text>
</comment>
<organism>
    <name type="scientific">Thermoplasma acidophilum (strain ATCC 25905 / DSM 1728 / JCM 9062 / NBRC 15155 / AMRC-C165)</name>
    <dbReference type="NCBI Taxonomy" id="273075"/>
    <lineage>
        <taxon>Archaea</taxon>
        <taxon>Methanobacteriati</taxon>
        <taxon>Thermoplasmatota</taxon>
        <taxon>Thermoplasmata</taxon>
        <taxon>Thermoplasmatales</taxon>
        <taxon>Thermoplasmataceae</taxon>
        <taxon>Thermoplasma</taxon>
    </lineage>
</organism>